<reference key="1">
    <citation type="submission" date="2003-06" db="EMBL/GenBank/DDBJ databases">
        <title>A specific late-ripening induced cDNA from strawberry receptacles that showed extense homology with the fruit-specific gene E4 isolated from tomato fruits.</title>
        <authorList>
            <person name="Pedraza-Lopez A."/>
            <person name="Cardenas-Torres J."/>
            <person name="Rodriguez-Franco A."/>
        </authorList>
    </citation>
    <scope>NUCLEOTIDE SEQUENCE</scope>
    <source>
        <tissue>Receptacle</tissue>
    </source>
</reference>
<sequence length="191" mass="21567">MASSTTNNPALDLDSDTPENPGHELAQFASGCFWGSELRFQRVVGVIKTEVGYSQGHVHDPNYRLVCSGTTNHSEVVRVQFDPQVCPYSDLLSVFWSRHDPTTLNRQGGDVGTQYRSGIYYYNEEQDCLAKKSKEAKQKEFKDKRVVTEILPAKRFYRAEEYHQQYLEKGGGNGNKQSAQKGCNDPIKCYG</sequence>
<keyword id="KW-0560">Oxidoreductase</keyword>
<organism>
    <name type="scientific">Fragaria ananassa</name>
    <name type="common">Strawberry</name>
    <name type="synonym">Fragaria chiloensis x Fragaria virginiana</name>
    <dbReference type="NCBI Taxonomy" id="3747"/>
    <lineage>
        <taxon>Eukaryota</taxon>
        <taxon>Viridiplantae</taxon>
        <taxon>Streptophyta</taxon>
        <taxon>Embryophyta</taxon>
        <taxon>Tracheophyta</taxon>
        <taxon>Spermatophyta</taxon>
        <taxon>Magnoliopsida</taxon>
        <taxon>eudicotyledons</taxon>
        <taxon>Gunneridae</taxon>
        <taxon>Pentapetalae</taxon>
        <taxon>rosids</taxon>
        <taxon>fabids</taxon>
        <taxon>Rosales</taxon>
        <taxon>Rosaceae</taxon>
        <taxon>Rosoideae</taxon>
        <taxon>Potentilleae</taxon>
        <taxon>Fragariinae</taxon>
        <taxon>Fragaria</taxon>
    </lineage>
</organism>
<feature type="chain" id="PRO_0000138634" description="Peptide methionine sulfoxide reductase">
    <location>
        <begin position="1"/>
        <end position="191"/>
    </location>
</feature>
<feature type="region of interest" description="Disordered" evidence="2">
    <location>
        <begin position="1"/>
        <end position="20"/>
    </location>
</feature>
<feature type="region of interest" description="Disordered" evidence="2">
    <location>
        <begin position="168"/>
        <end position="191"/>
    </location>
</feature>
<feature type="sequence conflict" description="In Ref. 1; CAC17011." evidence="3" ref="1">
    <original>R</original>
    <variation>C</variation>
    <location>
        <position position="106"/>
    </location>
</feature>
<dbReference type="EC" id="1.8.4.11"/>
<dbReference type="EMBL" id="Z69596">
    <property type="protein sequence ID" value="CAA93442.2"/>
    <property type="molecule type" value="mRNA"/>
</dbReference>
<dbReference type="EMBL" id="AJ297967">
    <property type="protein sequence ID" value="CAC17011.1"/>
    <property type="molecule type" value="Genomic_DNA"/>
</dbReference>
<dbReference type="SMR" id="P54152"/>
<dbReference type="GO" id="GO:0005737">
    <property type="term" value="C:cytoplasm"/>
    <property type="evidence" value="ECO:0007669"/>
    <property type="project" value="TreeGrafter"/>
</dbReference>
<dbReference type="GO" id="GO:0036456">
    <property type="term" value="F:L-methionine-(S)-S-oxide reductase activity"/>
    <property type="evidence" value="ECO:0007669"/>
    <property type="project" value="TreeGrafter"/>
</dbReference>
<dbReference type="GO" id="GO:0008113">
    <property type="term" value="F:peptide-methionine (S)-S-oxide reductase activity"/>
    <property type="evidence" value="ECO:0007669"/>
    <property type="project" value="UniProtKB-EC"/>
</dbReference>
<dbReference type="GO" id="GO:0034599">
    <property type="term" value="P:cellular response to oxidative stress"/>
    <property type="evidence" value="ECO:0007669"/>
    <property type="project" value="TreeGrafter"/>
</dbReference>
<dbReference type="FunFam" id="3.30.1060.10:FF:000002">
    <property type="entry name" value="Peptide methionine sulfoxide reductase"/>
    <property type="match status" value="1"/>
</dbReference>
<dbReference type="Gene3D" id="3.30.1060.10">
    <property type="entry name" value="Peptide methionine sulphoxide reductase MsrA"/>
    <property type="match status" value="1"/>
</dbReference>
<dbReference type="HAMAP" id="MF_01401">
    <property type="entry name" value="MsrA"/>
    <property type="match status" value="1"/>
</dbReference>
<dbReference type="InterPro" id="IPR002569">
    <property type="entry name" value="Met_Sox_Rdtase_MsrA_dom"/>
</dbReference>
<dbReference type="InterPro" id="IPR036509">
    <property type="entry name" value="Met_Sox_Rdtase_MsrA_sf"/>
</dbReference>
<dbReference type="InterPro" id="IPR050162">
    <property type="entry name" value="MsrA_MetSO_reductase"/>
</dbReference>
<dbReference type="NCBIfam" id="TIGR00401">
    <property type="entry name" value="msrA"/>
    <property type="match status" value="1"/>
</dbReference>
<dbReference type="PANTHER" id="PTHR42799">
    <property type="entry name" value="MITOCHONDRIAL PEPTIDE METHIONINE SULFOXIDE REDUCTASE"/>
    <property type="match status" value="1"/>
</dbReference>
<dbReference type="PANTHER" id="PTHR42799:SF18">
    <property type="entry name" value="PEPTIDE-METHIONINE (S)-S-OXIDE REDUCTASE"/>
    <property type="match status" value="1"/>
</dbReference>
<dbReference type="Pfam" id="PF01625">
    <property type="entry name" value="PMSR"/>
    <property type="match status" value="1"/>
</dbReference>
<dbReference type="SUPFAM" id="SSF55068">
    <property type="entry name" value="Peptide methionine sulfoxide reductase"/>
    <property type="match status" value="1"/>
</dbReference>
<comment type="function">
    <text evidence="1">Has an important function as a repair enzyme for proteins that have been inactivated by oxidation. Catalyzes the reversible oxidation-reduction of methionine sulfoxide in proteins to methionine (By similarity).</text>
</comment>
<comment type="catalytic activity">
    <reaction>
        <text>L-methionyl-[protein] + [thioredoxin]-disulfide + H2O = L-methionyl-(S)-S-oxide-[protein] + [thioredoxin]-dithiol</text>
        <dbReference type="Rhea" id="RHEA:14217"/>
        <dbReference type="Rhea" id="RHEA-COMP:10698"/>
        <dbReference type="Rhea" id="RHEA-COMP:10700"/>
        <dbReference type="Rhea" id="RHEA-COMP:12313"/>
        <dbReference type="Rhea" id="RHEA-COMP:12315"/>
        <dbReference type="ChEBI" id="CHEBI:15377"/>
        <dbReference type="ChEBI" id="CHEBI:16044"/>
        <dbReference type="ChEBI" id="CHEBI:29950"/>
        <dbReference type="ChEBI" id="CHEBI:44120"/>
        <dbReference type="ChEBI" id="CHEBI:50058"/>
        <dbReference type="EC" id="1.8.4.11"/>
    </reaction>
</comment>
<comment type="catalytic activity">
    <reaction>
        <text>[thioredoxin]-disulfide + L-methionine + H2O = L-methionine (S)-S-oxide + [thioredoxin]-dithiol</text>
        <dbReference type="Rhea" id="RHEA:19993"/>
        <dbReference type="Rhea" id="RHEA-COMP:10698"/>
        <dbReference type="Rhea" id="RHEA-COMP:10700"/>
        <dbReference type="ChEBI" id="CHEBI:15377"/>
        <dbReference type="ChEBI" id="CHEBI:29950"/>
        <dbReference type="ChEBI" id="CHEBI:50058"/>
        <dbReference type="ChEBI" id="CHEBI:57844"/>
        <dbReference type="ChEBI" id="CHEBI:58772"/>
        <dbReference type="EC" id="1.8.4.11"/>
    </reaction>
</comment>
<comment type="similarity">
    <text evidence="3">Belongs to the MsrA Met sulfoxide reductase family.</text>
</comment>
<name>MSRA_FRAAN</name>
<evidence type="ECO:0000250" key="1"/>
<evidence type="ECO:0000256" key="2">
    <source>
        <dbReference type="SAM" id="MobiDB-lite"/>
    </source>
</evidence>
<evidence type="ECO:0000305" key="3"/>
<proteinExistence type="evidence at transcript level"/>
<protein>
    <recommendedName>
        <fullName>Peptide methionine sulfoxide reductase</fullName>
        <ecNumber>1.8.4.11</ecNumber>
    </recommendedName>
    <alternativeName>
        <fullName>Fruit-ripening protein E4</fullName>
    </alternativeName>
    <alternativeName>
        <fullName>Peptide-methionine (S)-S-oxide reductase</fullName>
        <shortName>Peptide Met(O) reductase</shortName>
    </alternativeName>
    <alternativeName>
        <fullName>Protein-methionine-S-oxide reductase</fullName>
    </alternativeName>
</protein>
<accession>P54152</accession>
<accession>Q9FF06</accession>